<evidence type="ECO:0000250" key="1">
    <source>
        <dbReference type="UniProtKB" id="F1PRN2"/>
    </source>
</evidence>
<evidence type="ECO:0000250" key="2">
    <source>
        <dbReference type="UniProtKB" id="Q5SYD0"/>
    </source>
</evidence>
<evidence type="ECO:0000250" key="3">
    <source>
        <dbReference type="UniProtKB" id="Q63357"/>
    </source>
</evidence>
<evidence type="ECO:0000255" key="4">
    <source>
        <dbReference type="PROSITE-ProRule" id="PRU00116"/>
    </source>
</evidence>
<evidence type="ECO:0000255" key="5">
    <source>
        <dbReference type="PROSITE-ProRule" id="PRU00782"/>
    </source>
</evidence>
<evidence type="ECO:0000255" key="6">
    <source>
        <dbReference type="PROSITE-ProRule" id="PRU01093"/>
    </source>
</evidence>
<evidence type="ECO:0000269" key="7">
    <source ref="4"/>
</evidence>
<evidence type="ECO:0000305" key="8"/>
<evidence type="ECO:0007744" key="9">
    <source>
    </source>
</evidence>
<reference key="1">
    <citation type="submission" date="2003-01" db="EMBL/GenBank/DDBJ databases">
        <authorList>
            <person name="Nagase T."/>
            <person name="Kikuno R."/>
            <person name="Yamakawa H."/>
            <person name="Ohara O."/>
        </authorList>
    </citation>
    <scope>NUCLEOTIDE SEQUENCE [MRNA]</scope>
    <source>
        <tissue>Brain</tissue>
    </source>
</reference>
<reference key="2">
    <citation type="journal article" date="1998" name="DNA Res.">
        <title>Prediction of the coding sequences of unidentified human genes. XI. The complete sequences of 100 new cDNA clones from brain which code for large proteins in vitro.</title>
        <authorList>
            <person name="Nagase T."/>
            <person name="Ishikawa K."/>
            <person name="Suyama M."/>
            <person name="Kikuno R."/>
            <person name="Miyajima N."/>
            <person name="Tanaka A."/>
            <person name="Kotani H."/>
            <person name="Nomura N."/>
            <person name="Ohara O."/>
        </authorList>
    </citation>
    <scope>NUCLEOTIDE SEQUENCE [LARGE SCALE MRNA] OF 333-1006</scope>
    <source>
        <tissue>Brain</tissue>
    </source>
</reference>
<reference key="3">
    <citation type="journal article" date="2004" name="Genome Res.">
        <title>The status, quality, and expansion of the NIH full-length cDNA project: the Mammalian Gene Collection (MGC).</title>
        <authorList>
            <consortium name="The MGC Project Team"/>
        </authorList>
    </citation>
    <scope>NUCLEOTIDE SEQUENCE [LARGE SCALE MRNA]</scope>
    <source>
        <tissue>Testis</tissue>
    </source>
</reference>
<reference key="4">
    <citation type="submission" date="2009-03" db="UniProtKB">
        <authorList>
            <person name="Bienvenut W.V."/>
            <person name="Dozynkiewicz M."/>
            <person name="Norman J.C."/>
        </authorList>
    </citation>
    <scope>PROTEIN SEQUENCE OF 2-11; 239-248; 534-544; 791-801 AND 985-994</scope>
    <scope>CLEAVAGE OF INITIATOR METHIONINE</scope>
    <scope>ACETYLATION AT ALA-2</scope>
    <scope>IDENTIFICATION BY MASS SPECTROMETRY</scope>
    <source>
        <tissue>Ovarian carcinoma</tissue>
    </source>
</reference>
<reference key="5">
    <citation type="journal article" date="2008" name="Proc. Natl. Acad. Sci. U.S.A.">
        <title>A quantitative atlas of mitotic phosphorylation.</title>
        <authorList>
            <person name="Dephoure N."/>
            <person name="Zhou C."/>
            <person name="Villen J."/>
            <person name="Beausoleil S.A."/>
            <person name="Bakalarski C.E."/>
            <person name="Elledge S.J."/>
            <person name="Gygi S.P."/>
        </authorList>
    </citation>
    <scope>PHOSPHORYLATION [LARGE SCALE ANALYSIS] AT SER-200</scope>
    <scope>IDENTIFICATION BY MASS SPECTROMETRY [LARGE SCALE ANALYSIS]</scope>
    <source>
        <tissue>Cervix carcinoma</tissue>
    </source>
</reference>
<reference key="6">
    <citation type="journal article" date="2011" name="BMC Syst. Biol.">
        <title>Initial characterization of the human central proteome.</title>
        <authorList>
            <person name="Burkard T.R."/>
            <person name="Planyavsky M."/>
            <person name="Kaupe I."/>
            <person name="Breitwieser F.P."/>
            <person name="Buerckstuemmer T."/>
            <person name="Bennett K.L."/>
            <person name="Superti-Furga G."/>
            <person name="Colinge J."/>
        </authorList>
    </citation>
    <scope>IDENTIFICATION BY MASS SPECTROMETRY [LARGE SCALE ANALYSIS]</scope>
</reference>
<organism>
    <name type="scientific">Homo sapiens</name>
    <name type="common">Human</name>
    <dbReference type="NCBI Taxonomy" id="9606"/>
    <lineage>
        <taxon>Eukaryota</taxon>
        <taxon>Metazoa</taxon>
        <taxon>Chordata</taxon>
        <taxon>Craniata</taxon>
        <taxon>Vertebrata</taxon>
        <taxon>Euteleostomi</taxon>
        <taxon>Mammalia</taxon>
        <taxon>Eutheria</taxon>
        <taxon>Euarchontoglires</taxon>
        <taxon>Primates</taxon>
        <taxon>Haplorrhini</taxon>
        <taxon>Catarrhini</taxon>
        <taxon>Hominidae</taxon>
        <taxon>Homo</taxon>
    </lineage>
</organism>
<sequence>MAEQESLEFGKADFVLMDTVSMPEFMANLRLRFEKGRIYTFIGEVVVSVNPYKLLNIYGRDTIEQYKGRELYERPPHLFAIADAAYKAMKRRSKDTCIVISGESGAGKTEASKYIMQYIAAITNPSQRAEVERVKNMLLKSNCVLEAFGNAKTNRNDNSSRFGKYMDINFDFKGDPIGGHINNYLLEKSRVIVQQPGERSFHSFYQLLQGGSEQMLRSLHLQKSLSSYNYIHVGAQLKSSINDAAEFRVVADAMKVIGFKPEEIQTVYKILAAILHLGNLKFVVDGDTPLIENGKVVSIIAELLSTKTDMVEKALLYRTVATGRDIIDKQHTEQEASYGRDAFAKAIYERLFCWIVTRINDIIEVKNYDTTIHGKNTVIGVLDIYGFEIFDNNSFEQFCINYCNEKLQQLFIQLVLKQEQEEYQREGIPWKHIDYFNNQIIVDLVEQQHKGIIAILDDACMNVGKVTDEMFLEALNSKLGKHAHFSSRKLCASDKILEFDRDFRIRHYAGDVVYSVIGFIDKNKDTLFQDFKRLMYNSSNPVLKNMWPEGKLSITEVTKRPLTAATLFKNSMIALVDNLASKEPYYVRCIKPNDKKSPQIFDDERCRHQVEYLGLLENVRVRRAGFAFRQTYEKFLHRYKMISEFTWPNHDLPSDKEAVKKLIERCGFQDDVAYGKTKIFIRTPRTLFTLEELRAQMLIRIVLFLQKVWRGTLARMRYKRTKAALTIIRYYRRYKVKSYIHEVARRFHGVKTMRDYGKHVKWPSPPKVLRRFEEALQTIFNRWRASQLIKSIPASDLPQVRAKVAAVEMLKGQRADLGLQRAWEGNYLASKPDTPQTSGTFVPVANELKRKDKYMNVLFSCHVRKVNRFSKVEDRAIFVTDRHLYKMDPTKQYKVMKTIPLYNLTGLSVSNGKDQLVVFHTKDNKDLIVCLFSKQPTHESRIGELVGVLVNHFKSEKRHLQVNVTNPVQCSLHGKKCTVSVETRLNQPQPDFTKNRSGFILSVPGN</sequence>
<comment type="function">
    <text evidence="1 3">Unconventional myosin that functions as actin-based motor protein with ATPase activity (By similarity). Plays a role in endosomal protein trafficking, and especially in the transfer of cargo proteins from early to recycling endosomes (By similarity). Required for normal planar cell polarity in ciliated tracheal cells, for normal rotational polarity of cilia, and for coordinated, unidirectional ciliary movement in the trachea. Required for normal, polarized cilia organization in brain ependymal epithelial cells (By similarity).</text>
</comment>
<comment type="subunit">
    <text evidence="3">Interacts (via the two IQ motifs) with calmodulin. Binds an additional calmodulin chain via a third, C-terminal region. Interacts with F-actin.</text>
</comment>
<comment type="interaction">
    <interactant intactId="EBI-355634">
        <id>O94832</id>
    </interactant>
    <interactant intactId="EBI-2907478">
        <id>P43251</id>
        <label>BTD</label>
    </interactant>
    <organismsDiffer>false</organismsDiffer>
    <experiments>2</experiments>
</comment>
<comment type="subcellular location">
    <subcellularLocation>
        <location evidence="3">Cytoplasm</location>
    </subcellularLocation>
    <subcellularLocation>
        <location evidence="3">Perikaryon</location>
    </subcellularLocation>
    <subcellularLocation>
        <location evidence="3">Cell projection</location>
        <location evidence="3">Dendrite</location>
    </subcellularLocation>
    <subcellularLocation>
        <location evidence="1">Early endosome</location>
    </subcellularLocation>
    <subcellularLocation>
        <location evidence="3">Cytoplasm</location>
        <location evidence="3">Cell cortex</location>
    </subcellularLocation>
    <text evidence="3">Colocalizes with the actin cytoskeleton in the cell cortex close to the apical cell membrane. Colocalizes with cytoplasmic puncta that are reminiscent of transport vesicles.</text>
</comment>
<comment type="tissue specificity">
    <text>Expressed in many tissues. Highest levels in brain, followed by lung and ovary; expression is lowest in spleen.</text>
</comment>
<comment type="domain">
    <text evidence="3">Binds a calmodulin chain via each of the two IQ domains. IQ domain 1 mediates interaction with calmodulin both in the presence and in the absence of Ca(2+). IQ domain 2 mediates interaction with calmodulin in the presence of Ca(2+).</text>
</comment>
<comment type="domain">
    <text evidence="3">The TH1 domain is required for activity in complementing zebrafish defects in Kupffer's vesicle lumen size.</text>
</comment>
<comment type="similarity">
    <text evidence="8">Belongs to the TRAFAC class myosin-kinesin ATPase superfamily. Myosin family.</text>
</comment>
<comment type="caution">
    <text evidence="3">Contrary to the situation in zebrafish, xenopus and drosophila, mammalian MYO1D defects have no effects on left-right body asymmetry.</text>
</comment>
<comment type="caution">
    <text evidence="8">Represents an unconventional myosin. This protein should not be confused with the conventional myosin-1 (MYH1).</text>
</comment>
<comment type="sequence caution" evidence="8">
    <conflict type="erroneous initiation">
        <sequence resource="EMBL-CDS" id="BAA34447"/>
    </conflict>
</comment>
<feature type="initiator methionine" description="Removed" evidence="7">
    <location>
        <position position="1"/>
    </location>
</feature>
<feature type="chain" id="PRO_0000123447" description="Unconventional myosin-Id">
    <location>
        <begin position="2"/>
        <end position="1006"/>
    </location>
</feature>
<feature type="domain" description="Myosin motor" evidence="5">
    <location>
        <begin position="9"/>
        <end position="695"/>
    </location>
</feature>
<feature type="domain" description="IQ 1" evidence="4">
    <location>
        <begin position="699"/>
        <end position="719"/>
    </location>
</feature>
<feature type="domain" description="IQ 2" evidence="4">
    <location>
        <begin position="721"/>
        <end position="741"/>
    </location>
</feature>
<feature type="domain" description="TH1" evidence="6">
    <location>
        <begin position="812"/>
        <end position="1005"/>
    </location>
</feature>
<feature type="region of interest" description="Actin-binding" evidence="5">
    <location>
        <begin position="572"/>
        <end position="594"/>
    </location>
</feature>
<feature type="binding site" evidence="5">
    <location>
        <begin position="102"/>
        <end position="109"/>
    </location>
    <ligand>
        <name>ATP</name>
        <dbReference type="ChEBI" id="CHEBI:30616"/>
    </ligand>
</feature>
<feature type="modified residue" description="N-acetylalanine" evidence="7">
    <location>
        <position position="2"/>
    </location>
</feature>
<feature type="modified residue" description="Phosphoserine" evidence="9">
    <location>
        <position position="200"/>
    </location>
</feature>
<feature type="modified residue" description="Phosphotyrosine" evidence="2">
    <location>
        <position position="536"/>
    </location>
</feature>
<feature type="sequence variant" id="VAR_050210" description="In dbSNP:rs7209106.">
    <original>P</original>
    <variation>S</variation>
    <location>
        <position position="765"/>
    </location>
</feature>
<feature type="sequence variant" id="VAR_050211" description="In dbSNP:rs7215958.">
    <original>R</original>
    <variation>H</variation>
    <location>
        <position position="771"/>
    </location>
</feature>
<dbReference type="EMBL" id="AB018270">
    <property type="protein sequence ID" value="BAA34447.2"/>
    <property type="status" value="ALT_INIT"/>
    <property type="molecule type" value="mRNA"/>
</dbReference>
<dbReference type="EMBL" id="BC146763">
    <property type="protein sequence ID" value="AAI46764.1"/>
    <property type="molecule type" value="mRNA"/>
</dbReference>
<dbReference type="CCDS" id="CCDS32615.1"/>
<dbReference type="RefSeq" id="NP_001290208.1">
    <property type="nucleotide sequence ID" value="NM_001303279.1"/>
</dbReference>
<dbReference type="RefSeq" id="NP_056009.1">
    <property type="nucleotide sequence ID" value="NM_015194.3"/>
</dbReference>
<dbReference type="SMR" id="O94832"/>
<dbReference type="BioGRID" id="110726">
    <property type="interactions" value="224"/>
</dbReference>
<dbReference type="FunCoup" id="O94832">
    <property type="interactions" value="1385"/>
</dbReference>
<dbReference type="IntAct" id="O94832">
    <property type="interactions" value="103"/>
</dbReference>
<dbReference type="MINT" id="O94832"/>
<dbReference type="STRING" id="9606.ENSP00000324527"/>
<dbReference type="GlyGen" id="O94832">
    <property type="glycosylation" value="1 site, 1 O-linked glycan (1 site)"/>
</dbReference>
<dbReference type="iPTMnet" id="O94832"/>
<dbReference type="PhosphoSitePlus" id="O94832"/>
<dbReference type="SwissPalm" id="O94832"/>
<dbReference type="BioMuta" id="MYO1D"/>
<dbReference type="jPOST" id="O94832"/>
<dbReference type="MassIVE" id="O94832"/>
<dbReference type="PaxDb" id="9606-ENSP00000324527"/>
<dbReference type="PeptideAtlas" id="O94832"/>
<dbReference type="ProteomicsDB" id="50476"/>
<dbReference type="Pumba" id="O94832"/>
<dbReference type="Antibodypedia" id="27274">
    <property type="antibodies" value="105 antibodies from 24 providers"/>
</dbReference>
<dbReference type="DNASU" id="4642"/>
<dbReference type="Ensembl" id="ENST00000318217.10">
    <property type="protein sequence ID" value="ENSP00000324527.5"/>
    <property type="gene ID" value="ENSG00000176658.17"/>
</dbReference>
<dbReference type="GeneID" id="4642"/>
<dbReference type="KEGG" id="hsa:4642"/>
<dbReference type="MANE-Select" id="ENST00000318217.10">
    <property type="protein sequence ID" value="ENSP00000324527.5"/>
    <property type="RefSeq nucleotide sequence ID" value="NM_015194.3"/>
    <property type="RefSeq protein sequence ID" value="NP_056009.1"/>
</dbReference>
<dbReference type="UCSC" id="uc002hho.2">
    <property type="organism name" value="human"/>
</dbReference>
<dbReference type="AGR" id="HGNC:7598"/>
<dbReference type="CTD" id="4642"/>
<dbReference type="DisGeNET" id="4642"/>
<dbReference type="GeneCards" id="MYO1D"/>
<dbReference type="HGNC" id="HGNC:7598">
    <property type="gene designation" value="MYO1D"/>
</dbReference>
<dbReference type="HPA" id="ENSG00000176658">
    <property type="expression patterns" value="Tissue enhanced (intestine)"/>
</dbReference>
<dbReference type="MIM" id="606539">
    <property type="type" value="gene"/>
</dbReference>
<dbReference type="neXtProt" id="NX_O94832"/>
<dbReference type="OpenTargets" id="ENSG00000176658"/>
<dbReference type="PharmGKB" id="PA31400"/>
<dbReference type="VEuPathDB" id="HostDB:ENSG00000176658"/>
<dbReference type="eggNOG" id="KOG0164">
    <property type="taxonomic scope" value="Eukaryota"/>
</dbReference>
<dbReference type="GeneTree" id="ENSGT00940000157411"/>
<dbReference type="InParanoid" id="O94832"/>
<dbReference type="OMA" id="SSCIEIF"/>
<dbReference type="OrthoDB" id="6108017at2759"/>
<dbReference type="PAN-GO" id="O94832">
    <property type="GO annotations" value="9 GO annotations based on evolutionary models"/>
</dbReference>
<dbReference type="PhylomeDB" id="O94832"/>
<dbReference type="TreeFam" id="TF312960"/>
<dbReference type="PathwayCommons" id="O94832"/>
<dbReference type="SignaLink" id="O94832"/>
<dbReference type="BioGRID-ORCS" id="4642">
    <property type="hits" value="7 hits in 1150 CRISPR screens"/>
</dbReference>
<dbReference type="CD-CODE" id="232F8A39">
    <property type="entry name" value="P-body"/>
</dbReference>
<dbReference type="CD-CODE" id="FB4E32DD">
    <property type="entry name" value="Presynaptic clusters and postsynaptic densities"/>
</dbReference>
<dbReference type="ChiTaRS" id="MYO1D">
    <property type="organism name" value="human"/>
</dbReference>
<dbReference type="GenomeRNAi" id="4642"/>
<dbReference type="Pharos" id="O94832">
    <property type="development level" value="Tbio"/>
</dbReference>
<dbReference type="PRO" id="PR:O94832"/>
<dbReference type="Proteomes" id="UP000005640">
    <property type="component" value="Chromosome 17"/>
</dbReference>
<dbReference type="RNAct" id="O94832">
    <property type="molecule type" value="protein"/>
</dbReference>
<dbReference type="Bgee" id="ENSG00000176658">
    <property type="expression patterns" value="Expressed in ascending aorta and 173 other cell types or tissues"/>
</dbReference>
<dbReference type="ExpressionAtlas" id="O94832">
    <property type="expression patterns" value="baseline and differential"/>
</dbReference>
<dbReference type="GO" id="GO:0015629">
    <property type="term" value="C:actin cytoskeleton"/>
    <property type="evidence" value="ECO:0000318"/>
    <property type="project" value="GO_Central"/>
</dbReference>
<dbReference type="GO" id="GO:0097440">
    <property type="term" value="C:apical dendrite"/>
    <property type="evidence" value="ECO:0000250"/>
    <property type="project" value="UniProtKB"/>
</dbReference>
<dbReference type="GO" id="GO:0030673">
    <property type="term" value="C:axolemma"/>
    <property type="evidence" value="ECO:0000250"/>
    <property type="project" value="UniProtKB"/>
</dbReference>
<dbReference type="GO" id="GO:0030424">
    <property type="term" value="C:axon"/>
    <property type="evidence" value="ECO:0000250"/>
    <property type="project" value="UniProtKB"/>
</dbReference>
<dbReference type="GO" id="GO:0016323">
    <property type="term" value="C:basolateral plasma membrane"/>
    <property type="evidence" value="ECO:0000250"/>
    <property type="project" value="UniProtKB"/>
</dbReference>
<dbReference type="GO" id="GO:0005903">
    <property type="term" value="C:brush border"/>
    <property type="evidence" value="ECO:0000250"/>
    <property type="project" value="UniProtKB"/>
</dbReference>
<dbReference type="GO" id="GO:0005938">
    <property type="term" value="C:cell cortex"/>
    <property type="evidence" value="ECO:0007669"/>
    <property type="project" value="UniProtKB-SubCell"/>
</dbReference>
<dbReference type="GO" id="GO:0005737">
    <property type="term" value="C:cytoplasm"/>
    <property type="evidence" value="ECO:0000318"/>
    <property type="project" value="GO_Central"/>
</dbReference>
<dbReference type="GO" id="GO:0031410">
    <property type="term" value="C:cytoplasmic vesicle"/>
    <property type="evidence" value="ECO:0000250"/>
    <property type="project" value="UniProtKB"/>
</dbReference>
<dbReference type="GO" id="GO:0005769">
    <property type="term" value="C:early endosome"/>
    <property type="evidence" value="ECO:0007669"/>
    <property type="project" value="UniProtKB-SubCell"/>
</dbReference>
<dbReference type="GO" id="GO:0005768">
    <property type="term" value="C:endosome"/>
    <property type="evidence" value="ECO:0000250"/>
    <property type="project" value="UniProtKB"/>
</dbReference>
<dbReference type="GO" id="GO:0070062">
    <property type="term" value="C:extracellular exosome"/>
    <property type="evidence" value="ECO:0007005"/>
    <property type="project" value="UniProtKB"/>
</dbReference>
<dbReference type="GO" id="GO:0005902">
    <property type="term" value="C:microvillus"/>
    <property type="evidence" value="ECO:0000318"/>
    <property type="project" value="GO_Central"/>
</dbReference>
<dbReference type="GO" id="GO:0043209">
    <property type="term" value="C:myelin sheath"/>
    <property type="evidence" value="ECO:0000250"/>
    <property type="project" value="UniProtKB"/>
</dbReference>
<dbReference type="GO" id="GO:0016459">
    <property type="term" value="C:myosin complex"/>
    <property type="evidence" value="ECO:0000250"/>
    <property type="project" value="UniProtKB"/>
</dbReference>
<dbReference type="GO" id="GO:0043005">
    <property type="term" value="C:neuron projection"/>
    <property type="evidence" value="ECO:0000250"/>
    <property type="project" value="UniProtKB"/>
</dbReference>
<dbReference type="GO" id="GO:0043025">
    <property type="term" value="C:neuronal cell body"/>
    <property type="evidence" value="ECO:0000250"/>
    <property type="project" value="UniProtKB"/>
</dbReference>
<dbReference type="GO" id="GO:0043204">
    <property type="term" value="C:perikaryon"/>
    <property type="evidence" value="ECO:0007669"/>
    <property type="project" value="UniProtKB-SubCell"/>
</dbReference>
<dbReference type="GO" id="GO:0005886">
    <property type="term" value="C:plasma membrane"/>
    <property type="evidence" value="ECO:0000318"/>
    <property type="project" value="GO_Central"/>
</dbReference>
<dbReference type="GO" id="GO:0051015">
    <property type="term" value="F:actin filament binding"/>
    <property type="evidence" value="ECO:0000250"/>
    <property type="project" value="UniProtKB"/>
</dbReference>
<dbReference type="GO" id="GO:0005524">
    <property type="term" value="F:ATP binding"/>
    <property type="evidence" value="ECO:0007669"/>
    <property type="project" value="UniProtKB-KW"/>
</dbReference>
<dbReference type="GO" id="GO:0048306">
    <property type="term" value="F:calcium-dependent protein binding"/>
    <property type="evidence" value="ECO:0000250"/>
    <property type="project" value="UniProtKB"/>
</dbReference>
<dbReference type="GO" id="GO:0005516">
    <property type="term" value="F:calmodulin binding"/>
    <property type="evidence" value="ECO:0000250"/>
    <property type="project" value="UniProtKB"/>
</dbReference>
<dbReference type="GO" id="GO:0000146">
    <property type="term" value="F:microfilament motor activity"/>
    <property type="evidence" value="ECO:0000250"/>
    <property type="project" value="UniProtKB"/>
</dbReference>
<dbReference type="GO" id="GO:0019904">
    <property type="term" value="F:protein domain specific binding"/>
    <property type="evidence" value="ECO:0000353"/>
    <property type="project" value="UniProtKB"/>
</dbReference>
<dbReference type="GO" id="GO:0007015">
    <property type="term" value="P:actin filament organization"/>
    <property type="evidence" value="ECO:0000318"/>
    <property type="project" value="GO_Central"/>
</dbReference>
<dbReference type="GO" id="GO:0030048">
    <property type="term" value="P:actin filament-based movement"/>
    <property type="evidence" value="ECO:0000318"/>
    <property type="project" value="GO_Central"/>
</dbReference>
<dbReference type="GO" id="GO:0051641">
    <property type="term" value="P:cellular localization"/>
    <property type="evidence" value="ECO:0000250"/>
    <property type="project" value="UniProtKB"/>
</dbReference>
<dbReference type="GO" id="GO:0061502">
    <property type="term" value="P:early endosome to recycling endosome transport"/>
    <property type="evidence" value="ECO:0000250"/>
    <property type="project" value="UniProtKB"/>
</dbReference>
<dbReference type="GO" id="GO:0006897">
    <property type="term" value="P:endocytosis"/>
    <property type="evidence" value="ECO:0000318"/>
    <property type="project" value="GO_Central"/>
</dbReference>
<dbReference type="GO" id="GO:0015031">
    <property type="term" value="P:protein transport"/>
    <property type="evidence" value="ECO:0007669"/>
    <property type="project" value="UniProtKB-KW"/>
</dbReference>
<dbReference type="CDD" id="cd01378">
    <property type="entry name" value="MYSc_Myo1"/>
    <property type="match status" value="1"/>
</dbReference>
<dbReference type="FunFam" id="1.20.5.4820:FF:000003">
    <property type="entry name" value="Unconventional myosin ID"/>
    <property type="match status" value="1"/>
</dbReference>
<dbReference type="FunFam" id="1.20.58.530:FF:000004">
    <property type="entry name" value="Unconventional myosin ID"/>
    <property type="match status" value="1"/>
</dbReference>
<dbReference type="FunFam" id="1.20.120.720:FF:000009">
    <property type="entry name" value="Unconventional myosin-Id"/>
    <property type="match status" value="1"/>
</dbReference>
<dbReference type="FunFam" id="1.10.10.820:FF:000007">
    <property type="entry name" value="unconventional myosin-Id"/>
    <property type="match status" value="1"/>
</dbReference>
<dbReference type="Gene3D" id="1.10.10.820">
    <property type="match status" value="1"/>
</dbReference>
<dbReference type="Gene3D" id="1.20.5.4820">
    <property type="match status" value="1"/>
</dbReference>
<dbReference type="Gene3D" id="1.20.58.530">
    <property type="match status" value="1"/>
</dbReference>
<dbReference type="Gene3D" id="3.40.850.10">
    <property type="entry name" value="Kinesin motor domain"/>
    <property type="match status" value="1"/>
</dbReference>
<dbReference type="Gene3D" id="1.20.120.720">
    <property type="entry name" value="Myosin VI head, motor domain, U50 subdomain"/>
    <property type="match status" value="1"/>
</dbReference>
<dbReference type="InterPro" id="IPR000048">
    <property type="entry name" value="IQ_motif_EF-hand-BS"/>
</dbReference>
<dbReference type="InterPro" id="IPR036961">
    <property type="entry name" value="Kinesin_motor_dom_sf"/>
</dbReference>
<dbReference type="InterPro" id="IPR001609">
    <property type="entry name" value="Myosin_head_motor_dom-like"/>
</dbReference>
<dbReference type="InterPro" id="IPR010926">
    <property type="entry name" value="Myosin_TH1"/>
</dbReference>
<dbReference type="InterPro" id="IPR036072">
    <property type="entry name" value="MYSc_Myo1"/>
</dbReference>
<dbReference type="InterPro" id="IPR027417">
    <property type="entry name" value="P-loop_NTPase"/>
</dbReference>
<dbReference type="PANTHER" id="PTHR13140">
    <property type="entry name" value="MYOSIN"/>
    <property type="match status" value="1"/>
</dbReference>
<dbReference type="PANTHER" id="PTHR13140:SF417">
    <property type="entry name" value="UNCONVENTIONAL MYOSIN-ID"/>
    <property type="match status" value="1"/>
</dbReference>
<dbReference type="Pfam" id="PF00612">
    <property type="entry name" value="IQ"/>
    <property type="match status" value="1"/>
</dbReference>
<dbReference type="Pfam" id="PF00063">
    <property type="entry name" value="Myosin_head"/>
    <property type="match status" value="1"/>
</dbReference>
<dbReference type="Pfam" id="PF06017">
    <property type="entry name" value="Myosin_TH1"/>
    <property type="match status" value="1"/>
</dbReference>
<dbReference type="PRINTS" id="PR00193">
    <property type="entry name" value="MYOSINHEAVY"/>
</dbReference>
<dbReference type="SMART" id="SM00015">
    <property type="entry name" value="IQ"/>
    <property type="match status" value="1"/>
</dbReference>
<dbReference type="SMART" id="SM00242">
    <property type="entry name" value="MYSc"/>
    <property type="match status" value="1"/>
</dbReference>
<dbReference type="SUPFAM" id="SSF52540">
    <property type="entry name" value="P-loop containing nucleoside triphosphate hydrolases"/>
    <property type="match status" value="1"/>
</dbReference>
<dbReference type="PROSITE" id="PS50096">
    <property type="entry name" value="IQ"/>
    <property type="match status" value="1"/>
</dbReference>
<dbReference type="PROSITE" id="PS51456">
    <property type="entry name" value="MYOSIN_MOTOR"/>
    <property type="match status" value="1"/>
</dbReference>
<dbReference type="PROSITE" id="PS51757">
    <property type="entry name" value="TH1"/>
    <property type="match status" value="1"/>
</dbReference>
<accession>O94832</accession>
<accession>A6H8V3</accession>
<accession>Q8NHP9</accession>
<gene>
    <name type="primary">MYO1D</name>
    <name type="synonym">KIAA0727</name>
</gene>
<protein>
    <recommendedName>
        <fullName>Unconventional myosin-Id</fullName>
    </recommendedName>
</protein>
<proteinExistence type="evidence at protein level"/>
<name>MYO1D_HUMAN</name>
<keyword id="KW-0007">Acetylation</keyword>
<keyword id="KW-0009">Actin-binding</keyword>
<keyword id="KW-0067">ATP-binding</keyword>
<keyword id="KW-0112">Calmodulin-binding</keyword>
<keyword id="KW-0966">Cell projection</keyword>
<keyword id="KW-0963">Cytoplasm</keyword>
<keyword id="KW-0903">Direct protein sequencing</keyword>
<keyword id="KW-0967">Endosome</keyword>
<keyword id="KW-0505">Motor protein</keyword>
<keyword id="KW-0518">Myosin</keyword>
<keyword id="KW-0547">Nucleotide-binding</keyword>
<keyword id="KW-0597">Phosphoprotein</keyword>
<keyword id="KW-0653">Protein transport</keyword>
<keyword id="KW-1267">Proteomics identification</keyword>
<keyword id="KW-1185">Reference proteome</keyword>
<keyword id="KW-0677">Repeat</keyword>
<keyword id="KW-0813">Transport</keyword>